<comment type="function">
    <text evidence="1">F(1)F(0) ATP synthase produces ATP from ADP in the presence of a proton or sodium gradient. F-type ATPases consist of two structural domains, F(1) containing the extramembraneous catalytic core and F(0) containing the membrane proton channel, linked together by a central stalk and a peripheral stalk. During catalysis, ATP synthesis in the catalytic domain of F(1) is coupled via a rotary mechanism of the central stalk subunits to proton translocation.</text>
</comment>
<comment type="function">
    <text evidence="1">Component of the F(0) channel, it forms part of the peripheral stalk, linking F(1) to F(0).</text>
</comment>
<comment type="subunit">
    <text evidence="1">F-type ATPases have 2 components, F(1) - the catalytic core - and F(0) - the membrane proton channel. F(1) has five subunits: alpha(3), beta(3), gamma(1), delta(1), epsilon(1). F(0) has three main subunits: a(1), b(2) and c(10-14). The alpha and beta chains form an alternating ring which encloses part of the gamma chain. F(1) is attached to F(0) by a central stalk formed by the gamma and epsilon chains, while a peripheral stalk is formed by the delta and b chains.</text>
</comment>
<comment type="subcellular location">
    <subcellularLocation>
        <location evidence="1">Cell inner membrane</location>
        <topology evidence="1">Single-pass membrane protein</topology>
    </subcellularLocation>
</comment>
<comment type="similarity">
    <text evidence="1">Belongs to the ATPase B chain family.</text>
</comment>
<keyword id="KW-0066">ATP synthesis</keyword>
<keyword id="KW-0997">Cell inner membrane</keyword>
<keyword id="KW-1003">Cell membrane</keyword>
<keyword id="KW-0138">CF(0)</keyword>
<keyword id="KW-0375">Hydrogen ion transport</keyword>
<keyword id="KW-0406">Ion transport</keyword>
<keyword id="KW-0472">Membrane</keyword>
<keyword id="KW-0812">Transmembrane</keyword>
<keyword id="KW-1133">Transmembrane helix</keyword>
<keyword id="KW-0813">Transport</keyword>
<organism>
    <name type="scientific">Yersinia pseudotuberculosis serotype I (strain IP32953)</name>
    <dbReference type="NCBI Taxonomy" id="273123"/>
    <lineage>
        <taxon>Bacteria</taxon>
        <taxon>Pseudomonadati</taxon>
        <taxon>Pseudomonadota</taxon>
        <taxon>Gammaproteobacteria</taxon>
        <taxon>Enterobacterales</taxon>
        <taxon>Yersiniaceae</taxon>
        <taxon>Yersinia</taxon>
    </lineage>
</organism>
<protein>
    <recommendedName>
        <fullName evidence="1">ATP synthase subunit b</fullName>
    </recommendedName>
    <alternativeName>
        <fullName evidence="1">ATP synthase F(0) sector subunit b</fullName>
    </alternativeName>
    <alternativeName>
        <fullName evidence="1">ATPase subunit I</fullName>
    </alternativeName>
    <alternativeName>
        <fullName evidence="1">F-type ATPase subunit b</fullName>
        <shortName evidence="1">F-ATPase subunit b</shortName>
    </alternativeName>
</protein>
<reference key="1">
    <citation type="journal article" date="2004" name="Proc. Natl. Acad. Sci. U.S.A.">
        <title>Insights into the evolution of Yersinia pestis through whole-genome comparison with Yersinia pseudotuberculosis.</title>
        <authorList>
            <person name="Chain P.S.G."/>
            <person name="Carniel E."/>
            <person name="Larimer F.W."/>
            <person name="Lamerdin J."/>
            <person name="Stoutland P.O."/>
            <person name="Regala W.M."/>
            <person name="Georgescu A.M."/>
            <person name="Vergez L.M."/>
            <person name="Land M.L."/>
            <person name="Motin V.L."/>
            <person name="Brubaker R.R."/>
            <person name="Fowler J."/>
            <person name="Hinnebusch J."/>
            <person name="Marceau M."/>
            <person name="Medigue C."/>
            <person name="Simonet M."/>
            <person name="Chenal-Francisque V."/>
            <person name="Souza B."/>
            <person name="Dacheux D."/>
            <person name="Elliott J.M."/>
            <person name="Derbise A."/>
            <person name="Hauser L.J."/>
            <person name="Garcia E."/>
        </authorList>
    </citation>
    <scope>NUCLEOTIDE SEQUENCE [LARGE SCALE GENOMIC DNA]</scope>
    <source>
        <strain>IP32953</strain>
    </source>
</reference>
<name>ATPF_YERPS</name>
<evidence type="ECO:0000255" key="1">
    <source>
        <dbReference type="HAMAP-Rule" id="MF_01398"/>
    </source>
</evidence>
<gene>
    <name evidence="1" type="primary">atpF</name>
    <name type="ordered locus">YPTB3971</name>
</gene>
<dbReference type="EMBL" id="BX936398">
    <property type="protein sequence ID" value="CAH23209.1"/>
    <property type="molecule type" value="Genomic_DNA"/>
</dbReference>
<dbReference type="RefSeq" id="WP_002220762.1">
    <property type="nucleotide sequence ID" value="NZ_CP009712.1"/>
</dbReference>
<dbReference type="SMR" id="Q663Q4"/>
<dbReference type="GeneID" id="57974599"/>
<dbReference type="KEGG" id="ypo:BZ17_2604"/>
<dbReference type="KEGG" id="yps:YPTB3971"/>
<dbReference type="PATRIC" id="fig|273123.14.peg.2730"/>
<dbReference type="Proteomes" id="UP000001011">
    <property type="component" value="Chromosome"/>
</dbReference>
<dbReference type="GO" id="GO:0005886">
    <property type="term" value="C:plasma membrane"/>
    <property type="evidence" value="ECO:0007669"/>
    <property type="project" value="UniProtKB-SubCell"/>
</dbReference>
<dbReference type="GO" id="GO:0045259">
    <property type="term" value="C:proton-transporting ATP synthase complex"/>
    <property type="evidence" value="ECO:0007669"/>
    <property type="project" value="UniProtKB-KW"/>
</dbReference>
<dbReference type="GO" id="GO:0046933">
    <property type="term" value="F:proton-transporting ATP synthase activity, rotational mechanism"/>
    <property type="evidence" value="ECO:0007669"/>
    <property type="project" value="UniProtKB-UniRule"/>
</dbReference>
<dbReference type="GO" id="GO:0046961">
    <property type="term" value="F:proton-transporting ATPase activity, rotational mechanism"/>
    <property type="evidence" value="ECO:0007669"/>
    <property type="project" value="TreeGrafter"/>
</dbReference>
<dbReference type="CDD" id="cd06503">
    <property type="entry name" value="ATP-synt_Fo_b"/>
    <property type="match status" value="1"/>
</dbReference>
<dbReference type="FunFam" id="1.20.5.620:FF:000001">
    <property type="entry name" value="ATP synthase subunit b"/>
    <property type="match status" value="1"/>
</dbReference>
<dbReference type="Gene3D" id="1.20.5.620">
    <property type="entry name" value="F1F0 ATP synthase subunit B, membrane domain"/>
    <property type="match status" value="1"/>
</dbReference>
<dbReference type="HAMAP" id="MF_01398">
    <property type="entry name" value="ATP_synth_b_bprime"/>
    <property type="match status" value="1"/>
</dbReference>
<dbReference type="InterPro" id="IPR028987">
    <property type="entry name" value="ATP_synth_B-like_membr_sf"/>
</dbReference>
<dbReference type="InterPro" id="IPR002146">
    <property type="entry name" value="ATP_synth_b/b'su_bac/chlpt"/>
</dbReference>
<dbReference type="InterPro" id="IPR005864">
    <property type="entry name" value="ATP_synth_F0_bsu_bac"/>
</dbReference>
<dbReference type="InterPro" id="IPR050059">
    <property type="entry name" value="ATP_synthase_B_chain"/>
</dbReference>
<dbReference type="NCBIfam" id="TIGR01144">
    <property type="entry name" value="ATP_synt_b"/>
    <property type="match status" value="1"/>
</dbReference>
<dbReference type="NCBIfam" id="NF004411">
    <property type="entry name" value="PRK05759.1-2"/>
    <property type="match status" value="1"/>
</dbReference>
<dbReference type="NCBIfam" id="NF004413">
    <property type="entry name" value="PRK05759.1-4"/>
    <property type="match status" value="1"/>
</dbReference>
<dbReference type="PANTHER" id="PTHR33445:SF1">
    <property type="entry name" value="ATP SYNTHASE SUBUNIT B"/>
    <property type="match status" value="1"/>
</dbReference>
<dbReference type="PANTHER" id="PTHR33445">
    <property type="entry name" value="ATP SYNTHASE SUBUNIT B', CHLOROPLASTIC"/>
    <property type="match status" value="1"/>
</dbReference>
<dbReference type="Pfam" id="PF00430">
    <property type="entry name" value="ATP-synt_B"/>
    <property type="match status" value="1"/>
</dbReference>
<dbReference type="SUPFAM" id="SSF81573">
    <property type="entry name" value="F1F0 ATP synthase subunit B, membrane domain"/>
    <property type="match status" value="1"/>
</dbReference>
<accession>Q663Q4</accession>
<feature type="chain" id="PRO_5000099135" description="ATP synthase subunit b">
    <location>
        <begin position="1"/>
        <end position="156"/>
    </location>
</feature>
<feature type="transmembrane region" description="Helical" evidence="1">
    <location>
        <begin position="11"/>
        <end position="31"/>
    </location>
</feature>
<proteinExistence type="inferred from homology"/>
<sequence length="156" mass="17258">MNLNATILGQAIAFVLFVIFCMKYVWPPIMAAIEKRQQEIADGLSSAERAKKDLDLAQANATDQLKKAKAEAQVIIEQASKRKAQILDEAKAEAEQERNKIVAQAQAEIDAERKRAREELRKQVAMLAIAGAEKIIERSVDEAANSDIVDKLVAEL</sequence>